<gene>
    <name evidence="1" type="primary">ihfA</name>
    <name evidence="1" type="synonym">himA</name>
    <name type="ordered locus">RSc1583</name>
    <name type="ORF">RS03945</name>
</gene>
<accession>Q8XZ23</accession>
<keyword id="KW-0233">DNA recombination</keyword>
<keyword id="KW-0238">DNA-binding</keyword>
<keyword id="KW-1185">Reference proteome</keyword>
<keyword id="KW-0804">Transcription</keyword>
<keyword id="KW-0805">Transcription regulation</keyword>
<keyword id="KW-0810">Translation regulation</keyword>
<protein>
    <recommendedName>
        <fullName evidence="1">Integration host factor subunit alpha</fullName>
        <shortName evidence="1">IHF-alpha</shortName>
    </recommendedName>
</protein>
<dbReference type="EMBL" id="AL646052">
    <property type="protein sequence ID" value="CAD15285.1"/>
    <property type="molecule type" value="Genomic_DNA"/>
</dbReference>
<dbReference type="SMR" id="Q8XZ23"/>
<dbReference type="STRING" id="267608.RSc1583"/>
<dbReference type="EnsemblBacteria" id="CAD15285">
    <property type="protein sequence ID" value="CAD15285"/>
    <property type="gene ID" value="RSc1583"/>
</dbReference>
<dbReference type="KEGG" id="rso:RSc1583"/>
<dbReference type="eggNOG" id="COG0776">
    <property type="taxonomic scope" value="Bacteria"/>
</dbReference>
<dbReference type="HOGENOM" id="CLU_105066_1_0_4"/>
<dbReference type="Proteomes" id="UP000001436">
    <property type="component" value="Chromosome"/>
</dbReference>
<dbReference type="GO" id="GO:0005829">
    <property type="term" value="C:cytosol"/>
    <property type="evidence" value="ECO:0007669"/>
    <property type="project" value="TreeGrafter"/>
</dbReference>
<dbReference type="GO" id="GO:0003677">
    <property type="term" value="F:DNA binding"/>
    <property type="evidence" value="ECO:0007669"/>
    <property type="project" value="UniProtKB-UniRule"/>
</dbReference>
<dbReference type="GO" id="GO:0030527">
    <property type="term" value="F:structural constituent of chromatin"/>
    <property type="evidence" value="ECO:0007669"/>
    <property type="project" value="InterPro"/>
</dbReference>
<dbReference type="GO" id="GO:0006310">
    <property type="term" value="P:DNA recombination"/>
    <property type="evidence" value="ECO:0007669"/>
    <property type="project" value="UniProtKB-UniRule"/>
</dbReference>
<dbReference type="GO" id="GO:0009893">
    <property type="term" value="P:positive regulation of metabolic process"/>
    <property type="evidence" value="ECO:0007669"/>
    <property type="project" value="UniProtKB-ARBA"/>
</dbReference>
<dbReference type="GO" id="GO:0006355">
    <property type="term" value="P:regulation of DNA-templated transcription"/>
    <property type="evidence" value="ECO:0007669"/>
    <property type="project" value="UniProtKB-UniRule"/>
</dbReference>
<dbReference type="GO" id="GO:0006417">
    <property type="term" value="P:regulation of translation"/>
    <property type="evidence" value="ECO:0007669"/>
    <property type="project" value="UniProtKB-UniRule"/>
</dbReference>
<dbReference type="CDD" id="cd13835">
    <property type="entry name" value="IHF_A"/>
    <property type="match status" value="1"/>
</dbReference>
<dbReference type="FunFam" id="4.10.520.10:FF:000002">
    <property type="entry name" value="Integration host factor subunit alpha"/>
    <property type="match status" value="1"/>
</dbReference>
<dbReference type="Gene3D" id="4.10.520.10">
    <property type="entry name" value="IHF-like DNA-binding proteins"/>
    <property type="match status" value="1"/>
</dbReference>
<dbReference type="HAMAP" id="MF_00380">
    <property type="entry name" value="IHF_alpha"/>
    <property type="match status" value="1"/>
</dbReference>
<dbReference type="InterPro" id="IPR000119">
    <property type="entry name" value="Hist_DNA-bd"/>
</dbReference>
<dbReference type="InterPro" id="IPR020816">
    <property type="entry name" value="Histone-like_DNA-bd_CS"/>
</dbReference>
<dbReference type="InterPro" id="IPR010992">
    <property type="entry name" value="IHF-like_DNA-bd_dom_sf"/>
</dbReference>
<dbReference type="InterPro" id="IPR005684">
    <property type="entry name" value="IHF_alpha"/>
</dbReference>
<dbReference type="NCBIfam" id="TIGR00987">
    <property type="entry name" value="himA"/>
    <property type="match status" value="1"/>
</dbReference>
<dbReference type="NCBIfam" id="NF001401">
    <property type="entry name" value="PRK00285.1"/>
    <property type="match status" value="1"/>
</dbReference>
<dbReference type="PANTHER" id="PTHR33175">
    <property type="entry name" value="DNA-BINDING PROTEIN HU"/>
    <property type="match status" value="1"/>
</dbReference>
<dbReference type="PANTHER" id="PTHR33175:SF2">
    <property type="entry name" value="INTEGRATION HOST FACTOR SUBUNIT ALPHA"/>
    <property type="match status" value="1"/>
</dbReference>
<dbReference type="Pfam" id="PF00216">
    <property type="entry name" value="Bac_DNA_binding"/>
    <property type="match status" value="1"/>
</dbReference>
<dbReference type="PRINTS" id="PR01727">
    <property type="entry name" value="DNABINDINGHU"/>
</dbReference>
<dbReference type="SMART" id="SM00411">
    <property type="entry name" value="BHL"/>
    <property type="match status" value="1"/>
</dbReference>
<dbReference type="SUPFAM" id="SSF47729">
    <property type="entry name" value="IHF-like DNA-binding proteins"/>
    <property type="match status" value="1"/>
</dbReference>
<dbReference type="PROSITE" id="PS00045">
    <property type="entry name" value="HISTONE_LIKE"/>
    <property type="match status" value="1"/>
</dbReference>
<feature type="chain" id="PRO_0000105021" description="Integration host factor subunit alpha">
    <location>
        <begin position="1"/>
        <end position="104"/>
    </location>
</feature>
<feature type="region of interest" description="Disordered" evidence="2">
    <location>
        <begin position="51"/>
        <end position="70"/>
    </location>
</feature>
<name>IHFA_RALN1</name>
<evidence type="ECO:0000255" key="1">
    <source>
        <dbReference type="HAMAP-Rule" id="MF_00380"/>
    </source>
</evidence>
<evidence type="ECO:0000256" key="2">
    <source>
        <dbReference type="SAM" id="MobiDB-lite"/>
    </source>
</evidence>
<organism>
    <name type="scientific">Ralstonia nicotianae (strain ATCC BAA-1114 / GMI1000)</name>
    <name type="common">Ralstonia solanacearum</name>
    <dbReference type="NCBI Taxonomy" id="267608"/>
    <lineage>
        <taxon>Bacteria</taxon>
        <taxon>Pseudomonadati</taxon>
        <taxon>Pseudomonadota</taxon>
        <taxon>Betaproteobacteria</taxon>
        <taxon>Burkholderiales</taxon>
        <taxon>Burkholderiaceae</taxon>
        <taxon>Ralstonia</taxon>
        <taxon>Ralstonia solanacearum species complex</taxon>
    </lineage>
</organism>
<sequence length="104" mass="11639">MPTLTKAELAEMLFEQVGLNKRESKDMVEAFFDVIREALEQGDSVKLSGFGNFQLRDKPQRPGRNPKTGEIIPITARRVVTFHASQKLKALVEERVEPMPASAA</sequence>
<comment type="function">
    <text evidence="1">This protein is one of the two subunits of integration host factor, a specific DNA-binding protein that functions in genetic recombination as well as in transcriptional and translational control.</text>
</comment>
<comment type="subunit">
    <text evidence="1">Heterodimer of an alpha and a beta chain.</text>
</comment>
<comment type="similarity">
    <text evidence="1">Belongs to the bacterial histone-like protein family.</text>
</comment>
<reference key="1">
    <citation type="journal article" date="2002" name="Nature">
        <title>Genome sequence of the plant pathogen Ralstonia solanacearum.</title>
        <authorList>
            <person name="Salanoubat M."/>
            <person name="Genin S."/>
            <person name="Artiguenave F."/>
            <person name="Gouzy J."/>
            <person name="Mangenot S."/>
            <person name="Arlat M."/>
            <person name="Billault A."/>
            <person name="Brottier P."/>
            <person name="Camus J.-C."/>
            <person name="Cattolico L."/>
            <person name="Chandler M."/>
            <person name="Choisne N."/>
            <person name="Claudel-Renard C."/>
            <person name="Cunnac S."/>
            <person name="Demange N."/>
            <person name="Gaspin C."/>
            <person name="Lavie M."/>
            <person name="Moisan A."/>
            <person name="Robert C."/>
            <person name="Saurin W."/>
            <person name="Schiex T."/>
            <person name="Siguier P."/>
            <person name="Thebault P."/>
            <person name="Whalen M."/>
            <person name="Wincker P."/>
            <person name="Levy M."/>
            <person name="Weissenbach J."/>
            <person name="Boucher C.A."/>
        </authorList>
    </citation>
    <scope>NUCLEOTIDE SEQUENCE [LARGE SCALE GENOMIC DNA]</scope>
    <source>
        <strain>ATCC BAA-1114 / GMI1000</strain>
    </source>
</reference>
<proteinExistence type="inferred from homology"/>